<keyword id="KW-0274">FAD</keyword>
<keyword id="KW-0285">Flavoprotein</keyword>
<keyword id="KW-0503">Monooxygenase</keyword>
<keyword id="KW-0521">NADP</keyword>
<keyword id="KW-0560">Oxidoreductase</keyword>
<keyword id="KW-1185">Reference proteome</keyword>
<dbReference type="EC" id="1.14.13.-"/>
<dbReference type="EMBL" id="LT708304">
    <property type="protein sequence ID" value="SIT99514.1"/>
    <property type="molecule type" value="Genomic_DNA"/>
</dbReference>
<dbReference type="RefSeq" id="NP_854573.1">
    <property type="nucleotide sequence ID" value="NC_002945.3"/>
</dbReference>
<dbReference type="RefSeq" id="WP_003404651.1">
    <property type="nucleotide sequence ID" value="NC_002945.4"/>
</dbReference>
<dbReference type="SMR" id="P64746"/>
<dbReference type="KEGG" id="mbo:BQ2027_MB0916"/>
<dbReference type="PATRIC" id="fig|233413.5.peg.997"/>
<dbReference type="Proteomes" id="UP000001419">
    <property type="component" value="Chromosome"/>
</dbReference>
<dbReference type="GO" id="GO:0050660">
    <property type="term" value="F:flavin adenine dinucleotide binding"/>
    <property type="evidence" value="ECO:0007669"/>
    <property type="project" value="InterPro"/>
</dbReference>
<dbReference type="GO" id="GO:0004499">
    <property type="term" value="F:N,N-dimethylaniline monooxygenase activity"/>
    <property type="evidence" value="ECO:0007669"/>
    <property type="project" value="InterPro"/>
</dbReference>
<dbReference type="GO" id="GO:0050661">
    <property type="term" value="F:NADP binding"/>
    <property type="evidence" value="ECO:0007669"/>
    <property type="project" value="InterPro"/>
</dbReference>
<dbReference type="Gene3D" id="3.50.50.60">
    <property type="entry name" value="FAD/NAD(P)-binding domain"/>
    <property type="match status" value="2"/>
</dbReference>
<dbReference type="InterPro" id="IPR051209">
    <property type="entry name" value="FAD-bind_Monooxygenase_sf"/>
</dbReference>
<dbReference type="InterPro" id="IPR036188">
    <property type="entry name" value="FAD/NAD-bd_sf"/>
</dbReference>
<dbReference type="InterPro" id="IPR020946">
    <property type="entry name" value="Flavin_mOase-like"/>
</dbReference>
<dbReference type="PANTHER" id="PTHR42877:SF4">
    <property type="entry name" value="FAD_NAD(P)-BINDING DOMAIN-CONTAINING PROTEIN-RELATED"/>
    <property type="match status" value="1"/>
</dbReference>
<dbReference type="PANTHER" id="PTHR42877">
    <property type="entry name" value="L-ORNITHINE N(5)-MONOOXYGENASE-RELATED"/>
    <property type="match status" value="1"/>
</dbReference>
<dbReference type="Pfam" id="PF00743">
    <property type="entry name" value="FMO-like"/>
    <property type="match status" value="1"/>
</dbReference>
<dbReference type="PRINTS" id="PR00411">
    <property type="entry name" value="PNDRDTASEI"/>
</dbReference>
<dbReference type="SUPFAM" id="SSF51905">
    <property type="entry name" value="FAD/NAD(P)-binding domain"/>
    <property type="match status" value="2"/>
</dbReference>
<gene>
    <name type="ordered locus">BQ2027_MB0916</name>
</gene>
<organism>
    <name type="scientific">Mycobacterium bovis (strain ATCC BAA-935 / AF2122/97)</name>
    <dbReference type="NCBI Taxonomy" id="233413"/>
    <lineage>
        <taxon>Bacteria</taxon>
        <taxon>Bacillati</taxon>
        <taxon>Actinomycetota</taxon>
        <taxon>Actinomycetes</taxon>
        <taxon>Mycobacteriales</taxon>
        <taxon>Mycobacteriaceae</taxon>
        <taxon>Mycobacterium</taxon>
        <taxon>Mycobacterium tuberculosis complex</taxon>
    </lineage>
</organism>
<name>Y916_MYCBO</name>
<accession>P64746</accession>
<accession>A0A1R3XWS7</accession>
<accession>Q10532</accession>
<accession>X2BGG8</accession>
<protein>
    <recommendedName>
        <fullName>Uncharacterized monooxygenase Mb0916</fullName>
        <ecNumber>1.14.13.-</ecNumber>
    </recommendedName>
</protein>
<comment type="cofactor">
    <cofactor evidence="1">
        <name>FAD</name>
        <dbReference type="ChEBI" id="CHEBI:57692"/>
    </cofactor>
</comment>
<comment type="similarity">
    <text evidence="3">Belongs to the FAD-binding monooxygenase family.</text>
</comment>
<reference key="1">
    <citation type="journal article" date="2003" name="Proc. Natl. Acad. Sci. U.S.A.">
        <title>The complete genome sequence of Mycobacterium bovis.</title>
        <authorList>
            <person name="Garnier T."/>
            <person name="Eiglmeier K."/>
            <person name="Camus J.-C."/>
            <person name="Medina N."/>
            <person name="Mansoor H."/>
            <person name="Pryor M."/>
            <person name="Duthoy S."/>
            <person name="Grondin S."/>
            <person name="Lacroix C."/>
            <person name="Monsempe C."/>
            <person name="Simon S."/>
            <person name="Harris B."/>
            <person name="Atkin R."/>
            <person name="Doggett J."/>
            <person name="Mayes R."/>
            <person name="Keating L."/>
            <person name="Wheeler P.R."/>
            <person name="Parkhill J."/>
            <person name="Barrell B.G."/>
            <person name="Cole S.T."/>
            <person name="Gordon S.V."/>
            <person name="Hewinson R.G."/>
        </authorList>
    </citation>
    <scope>NUCLEOTIDE SEQUENCE [LARGE SCALE GENOMIC DNA]</scope>
    <source>
        <strain>ATCC BAA-935 / AF2122/97</strain>
    </source>
</reference>
<reference key="2">
    <citation type="journal article" date="2017" name="Genome Announc.">
        <title>Updated reference genome sequence and annotation of Mycobacterium bovis AF2122/97.</title>
        <authorList>
            <person name="Malone K.M."/>
            <person name="Farrell D."/>
            <person name="Stuber T.P."/>
            <person name="Schubert O.T."/>
            <person name="Aebersold R."/>
            <person name="Robbe-Austerman S."/>
            <person name="Gordon S.V."/>
        </authorList>
    </citation>
    <scope>NUCLEOTIDE SEQUENCE [LARGE SCALE GENOMIC DNA]</scope>
    <scope>GENOME REANNOTATION</scope>
    <source>
        <strain>ATCC BAA-935 / AF2122/97</strain>
    </source>
</reference>
<sequence length="495" mass="55039">MTGRCPTVAVVGAGMSGMCVAITLLSAGITDVCIYEKADDVGGTWRDNTYPGLTCDVPSRLYQYSFAKNPNWTQMFSRGGEIQDYLRGIAERYGLRHRIRFGATVVSARFDDGRWVLRTDSGTESTVDFLISATGVLHHPRIPPIAGLDDFRGTVFHSARWDHTVPLLGRRIAVIGTGSTGVQLVCGLAGVAGKVTMFQRTAQWVLPWPNPRYSKLARVFHRAFPCLGSLAYKAYSLSFETFAVALSNPGLHRKLVGAVCRASLRRVRDPRLRRALTPDYEPMCKRLVMSGGFYRAIQRDDVELVTAGIDHVEHRGIVTDDGVLHEVDVIVLATGFDSHAFFRPMQLTGRDGIRIDDVWQDGPHAHQTVAIPGFPNFFMMLGPHSPVGNFPLTAVAESQAEHIVQWIKRWRHGEFDTMEPKSAATEAYNTVLRAAMPNTVWTTGCDSWYLNKDGIPEVWPFAPAKHRAMLANLHPEEYDLRRYAAVRATSRPQSA</sequence>
<proteinExistence type="inferred from homology"/>
<evidence type="ECO:0000250" key="1"/>
<evidence type="ECO:0000255" key="2"/>
<evidence type="ECO:0000305" key="3"/>
<feature type="chain" id="PRO_0000186459" description="Uncharacterized monooxygenase Mb0916">
    <location>
        <begin position="1"/>
        <end position="495"/>
    </location>
</feature>
<feature type="binding site" evidence="1">
    <location>
        <position position="16"/>
    </location>
    <ligand>
        <name>FAD</name>
        <dbReference type="ChEBI" id="CHEBI:57692"/>
    </ligand>
</feature>
<feature type="binding site" evidence="1">
    <location>
        <position position="36"/>
    </location>
    <ligand>
        <name>FAD</name>
        <dbReference type="ChEBI" id="CHEBI:57692"/>
    </ligand>
</feature>
<feature type="binding site" evidence="1">
    <location>
        <position position="45"/>
    </location>
    <ligand>
        <name>FAD</name>
        <dbReference type="ChEBI" id="CHEBI:57692"/>
    </ligand>
</feature>
<feature type="binding site" evidence="1">
    <location>
        <position position="56"/>
    </location>
    <ligand>
        <name>FAD</name>
        <dbReference type="ChEBI" id="CHEBI:57692"/>
    </ligand>
</feature>
<feature type="binding site" evidence="1">
    <location>
        <position position="62"/>
    </location>
    <ligand>
        <name>FAD</name>
        <dbReference type="ChEBI" id="CHEBI:57692"/>
    </ligand>
</feature>
<feature type="binding site" evidence="1">
    <location>
        <position position="105"/>
    </location>
    <ligand>
        <name>FAD</name>
        <dbReference type="ChEBI" id="CHEBI:57692"/>
    </ligand>
</feature>
<feature type="site" description="Transition state stabilizer" evidence="2">
    <location>
        <position position="286"/>
    </location>
</feature>